<feature type="chain" id="PRO_0000382672" description="Uncharacterized protein YpzF">
    <location>
        <begin position="1"/>
        <end position="48"/>
    </location>
</feature>
<feature type="region of interest" description="Disordered" evidence="1">
    <location>
        <begin position="1"/>
        <end position="30"/>
    </location>
</feature>
<reference key="1">
    <citation type="journal article" date="1997" name="Nature">
        <title>The complete genome sequence of the Gram-positive bacterium Bacillus subtilis.</title>
        <authorList>
            <person name="Kunst F."/>
            <person name="Ogasawara N."/>
            <person name="Moszer I."/>
            <person name="Albertini A.M."/>
            <person name="Alloni G."/>
            <person name="Azevedo V."/>
            <person name="Bertero M.G."/>
            <person name="Bessieres P."/>
            <person name="Bolotin A."/>
            <person name="Borchert S."/>
            <person name="Borriss R."/>
            <person name="Boursier L."/>
            <person name="Brans A."/>
            <person name="Braun M."/>
            <person name="Brignell S.C."/>
            <person name="Bron S."/>
            <person name="Brouillet S."/>
            <person name="Bruschi C.V."/>
            <person name="Caldwell B."/>
            <person name="Capuano V."/>
            <person name="Carter N.M."/>
            <person name="Choi S.-K."/>
            <person name="Codani J.-J."/>
            <person name="Connerton I.F."/>
            <person name="Cummings N.J."/>
            <person name="Daniel R.A."/>
            <person name="Denizot F."/>
            <person name="Devine K.M."/>
            <person name="Duesterhoeft A."/>
            <person name="Ehrlich S.D."/>
            <person name="Emmerson P.T."/>
            <person name="Entian K.-D."/>
            <person name="Errington J."/>
            <person name="Fabret C."/>
            <person name="Ferrari E."/>
            <person name="Foulger D."/>
            <person name="Fritz C."/>
            <person name="Fujita M."/>
            <person name="Fujita Y."/>
            <person name="Fuma S."/>
            <person name="Galizzi A."/>
            <person name="Galleron N."/>
            <person name="Ghim S.-Y."/>
            <person name="Glaser P."/>
            <person name="Goffeau A."/>
            <person name="Golightly E.J."/>
            <person name="Grandi G."/>
            <person name="Guiseppi G."/>
            <person name="Guy B.J."/>
            <person name="Haga K."/>
            <person name="Haiech J."/>
            <person name="Harwood C.R."/>
            <person name="Henaut A."/>
            <person name="Hilbert H."/>
            <person name="Holsappel S."/>
            <person name="Hosono S."/>
            <person name="Hullo M.-F."/>
            <person name="Itaya M."/>
            <person name="Jones L.-M."/>
            <person name="Joris B."/>
            <person name="Karamata D."/>
            <person name="Kasahara Y."/>
            <person name="Klaerr-Blanchard M."/>
            <person name="Klein C."/>
            <person name="Kobayashi Y."/>
            <person name="Koetter P."/>
            <person name="Koningstein G."/>
            <person name="Krogh S."/>
            <person name="Kumano M."/>
            <person name="Kurita K."/>
            <person name="Lapidus A."/>
            <person name="Lardinois S."/>
            <person name="Lauber J."/>
            <person name="Lazarevic V."/>
            <person name="Lee S.-M."/>
            <person name="Levine A."/>
            <person name="Liu H."/>
            <person name="Masuda S."/>
            <person name="Mauel C."/>
            <person name="Medigue C."/>
            <person name="Medina N."/>
            <person name="Mellado R.P."/>
            <person name="Mizuno M."/>
            <person name="Moestl D."/>
            <person name="Nakai S."/>
            <person name="Noback M."/>
            <person name="Noone D."/>
            <person name="O'Reilly M."/>
            <person name="Ogawa K."/>
            <person name="Ogiwara A."/>
            <person name="Oudega B."/>
            <person name="Park S.-H."/>
            <person name="Parro V."/>
            <person name="Pohl T.M."/>
            <person name="Portetelle D."/>
            <person name="Porwollik S."/>
            <person name="Prescott A.M."/>
            <person name="Presecan E."/>
            <person name="Pujic P."/>
            <person name="Purnelle B."/>
            <person name="Rapoport G."/>
            <person name="Rey M."/>
            <person name="Reynolds S."/>
            <person name="Rieger M."/>
            <person name="Rivolta C."/>
            <person name="Rocha E."/>
            <person name="Roche B."/>
            <person name="Rose M."/>
            <person name="Sadaie Y."/>
            <person name="Sato T."/>
            <person name="Scanlan E."/>
            <person name="Schleich S."/>
            <person name="Schroeter R."/>
            <person name="Scoffone F."/>
            <person name="Sekiguchi J."/>
            <person name="Sekowska A."/>
            <person name="Seror S.J."/>
            <person name="Serror P."/>
            <person name="Shin B.-S."/>
            <person name="Soldo B."/>
            <person name="Sorokin A."/>
            <person name="Tacconi E."/>
            <person name="Takagi T."/>
            <person name="Takahashi H."/>
            <person name="Takemaru K."/>
            <person name="Takeuchi M."/>
            <person name="Tamakoshi A."/>
            <person name="Tanaka T."/>
            <person name="Terpstra P."/>
            <person name="Tognoni A."/>
            <person name="Tosato V."/>
            <person name="Uchiyama S."/>
            <person name="Vandenbol M."/>
            <person name="Vannier F."/>
            <person name="Vassarotti A."/>
            <person name="Viari A."/>
            <person name="Wambutt R."/>
            <person name="Wedler E."/>
            <person name="Wedler H."/>
            <person name="Weitzenegger T."/>
            <person name="Winters P."/>
            <person name="Wipat A."/>
            <person name="Yamamoto H."/>
            <person name="Yamane K."/>
            <person name="Yasumoto K."/>
            <person name="Yata K."/>
            <person name="Yoshida K."/>
            <person name="Yoshikawa H.-F."/>
            <person name="Zumstein E."/>
            <person name="Yoshikawa H."/>
            <person name="Danchin A."/>
        </authorList>
    </citation>
    <scope>NUCLEOTIDE SEQUENCE [LARGE SCALE GENOMIC DNA]</scope>
    <source>
        <strain>168</strain>
    </source>
</reference>
<gene>
    <name type="primary">ypzF</name>
    <name type="ordered locus">BSU22019</name>
</gene>
<organism>
    <name type="scientific">Bacillus subtilis (strain 168)</name>
    <dbReference type="NCBI Taxonomy" id="224308"/>
    <lineage>
        <taxon>Bacteria</taxon>
        <taxon>Bacillati</taxon>
        <taxon>Bacillota</taxon>
        <taxon>Bacilli</taxon>
        <taxon>Bacillales</taxon>
        <taxon>Bacillaceae</taxon>
        <taxon>Bacillus</taxon>
    </lineage>
</organism>
<accession>C0H443</accession>
<sequence>MLGRTKLGNRNAQANNNAKKKNGFQTHFDSYAGREAEKLIASNKRHND</sequence>
<proteinExistence type="predicted"/>
<name>YPZF_BACSU</name>
<evidence type="ECO:0000256" key="1">
    <source>
        <dbReference type="SAM" id="MobiDB-lite"/>
    </source>
</evidence>
<dbReference type="EMBL" id="AL009126">
    <property type="protein sequence ID" value="CAX52652.1"/>
    <property type="molecule type" value="Genomic_DNA"/>
</dbReference>
<dbReference type="RefSeq" id="WP_003230761.1">
    <property type="nucleotide sequence ID" value="NZ_OZ025638.1"/>
</dbReference>
<dbReference type="RefSeq" id="YP_003097753.1">
    <property type="nucleotide sequence ID" value="NC_000964.3"/>
</dbReference>
<dbReference type="STRING" id="224308.BSU22019"/>
<dbReference type="PaxDb" id="224308-BSU22019"/>
<dbReference type="EnsemblBacteria" id="CAX52652">
    <property type="protein sequence ID" value="CAX52652"/>
    <property type="gene ID" value="BSU_22019"/>
</dbReference>
<dbReference type="GeneID" id="8302979"/>
<dbReference type="KEGG" id="bsu:BSU22019"/>
<dbReference type="PATRIC" id="fig|224308.43.peg.2295"/>
<dbReference type="InParanoid" id="C0H443"/>
<dbReference type="BioCyc" id="BSUB:BSU22019-MONOMER"/>
<dbReference type="Proteomes" id="UP000001570">
    <property type="component" value="Chromosome"/>
</dbReference>
<protein>
    <recommendedName>
        <fullName>Uncharacterized protein YpzF</fullName>
    </recommendedName>
</protein>
<keyword id="KW-1185">Reference proteome</keyword>